<reference key="1">
    <citation type="journal article" date="2004" name="Nature">
        <title>Genome sequence of the Brown Norway rat yields insights into mammalian evolution.</title>
        <authorList>
            <person name="Gibbs R.A."/>
            <person name="Weinstock G.M."/>
            <person name="Metzker M.L."/>
            <person name="Muzny D.M."/>
            <person name="Sodergren E.J."/>
            <person name="Scherer S."/>
            <person name="Scott G."/>
            <person name="Steffen D."/>
            <person name="Worley K.C."/>
            <person name="Burch P.E."/>
            <person name="Okwuonu G."/>
            <person name="Hines S."/>
            <person name="Lewis L."/>
            <person name="Deramo C."/>
            <person name="Delgado O."/>
            <person name="Dugan-Rocha S."/>
            <person name="Miner G."/>
            <person name="Morgan M."/>
            <person name="Hawes A."/>
            <person name="Gill R."/>
            <person name="Holt R.A."/>
            <person name="Adams M.D."/>
            <person name="Amanatides P.G."/>
            <person name="Baden-Tillson H."/>
            <person name="Barnstead M."/>
            <person name="Chin S."/>
            <person name="Evans C.A."/>
            <person name="Ferriera S."/>
            <person name="Fosler C."/>
            <person name="Glodek A."/>
            <person name="Gu Z."/>
            <person name="Jennings D."/>
            <person name="Kraft C.L."/>
            <person name="Nguyen T."/>
            <person name="Pfannkoch C.M."/>
            <person name="Sitter C."/>
            <person name="Sutton G.G."/>
            <person name="Venter J.C."/>
            <person name="Woodage T."/>
            <person name="Smith D."/>
            <person name="Lee H.-M."/>
            <person name="Gustafson E."/>
            <person name="Cahill P."/>
            <person name="Kana A."/>
            <person name="Doucette-Stamm L."/>
            <person name="Weinstock K."/>
            <person name="Fechtel K."/>
            <person name="Weiss R.B."/>
            <person name="Dunn D.M."/>
            <person name="Green E.D."/>
            <person name="Blakesley R.W."/>
            <person name="Bouffard G.G."/>
            <person name="De Jong P.J."/>
            <person name="Osoegawa K."/>
            <person name="Zhu B."/>
            <person name="Marra M."/>
            <person name="Schein J."/>
            <person name="Bosdet I."/>
            <person name="Fjell C."/>
            <person name="Jones S."/>
            <person name="Krzywinski M."/>
            <person name="Mathewson C."/>
            <person name="Siddiqui A."/>
            <person name="Wye N."/>
            <person name="McPherson J."/>
            <person name="Zhao S."/>
            <person name="Fraser C.M."/>
            <person name="Shetty J."/>
            <person name="Shatsman S."/>
            <person name="Geer K."/>
            <person name="Chen Y."/>
            <person name="Abramzon S."/>
            <person name="Nierman W.C."/>
            <person name="Havlak P.H."/>
            <person name="Chen R."/>
            <person name="Durbin K.J."/>
            <person name="Egan A."/>
            <person name="Ren Y."/>
            <person name="Song X.-Z."/>
            <person name="Li B."/>
            <person name="Liu Y."/>
            <person name="Qin X."/>
            <person name="Cawley S."/>
            <person name="Cooney A.J."/>
            <person name="D'Souza L.M."/>
            <person name="Martin K."/>
            <person name="Wu J.Q."/>
            <person name="Gonzalez-Garay M.L."/>
            <person name="Jackson A.R."/>
            <person name="Kalafus K.J."/>
            <person name="McLeod M.P."/>
            <person name="Milosavljevic A."/>
            <person name="Virk D."/>
            <person name="Volkov A."/>
            <person name="Wheeler D.A."/>
            <person name="Zhang Z."/>
            <person name="Bailey J.A."/>
            <person name="Eichler E.E."/>
            <person name="Tuzun E."/>
            <person name="Birney E."/>
            <person name="Mongin E."/>
            <person name="Ureta-Vidal A."/>
            <person name="Woodwark C."/>
            <person name="Zdobnov E."/>
            <person name="Bork P."/>
            <person name="Suyama M."/>
            <person name="Torrents D."/>
            <person name="Alexandersson M."/>
            <person name="Trask B.J."/>
            <person name="Young J.M."/>
            <person name="Huang H."/>
            <person name="Wang H."/>
            <person name="Xing H."/>
            <person name="Daniels S."/>
            <person name="Gietzen D."/>
            <person name="Schmidt J."/>
            <person name="Stevens K."/>
            <person name="Vitt U."/>
            <person name="Wingrove J."/>
            <person name="Camara F."/>
            <person name="Mar Alba M."/>
            <person name="Abril J.F."/>
            <person name="Guigo R."/>
            <person name="Smit A."/>
            <person name="Dubchak I."/>
            <person name="Rubin E.M."/>
            <person name="Couronne O."/>
            <person name="Poliakov A."/>
            <person name="Huebner N."/>
            <person name="Ganten D."/>
            <person name="Goesele C."/>
            <person name="Hummel O."/>
            <person name="Kreitler T."/>
            <person name="Lee Y.-A."/>
            <person name="Monti J."/>
            <person name="Schulz H."/>
            <person name="Zimdahl H."/>
            <person name="Himmelbauer H."/>
            <person name="Lehrach H."/>
            <person name="Jacob H.J."/>
            <person name="Bromberg S."/>
            <person name="Gullings-Handley J."/>
            <person name="Jensen-Seaman M.I."/>
            <person name="Kwitek A.E."/>
            <person name="Lazar J."/>
            <person name="Pasko D."/>
            <person name="Tonellato P.J."/>
            <person name="Twigger S."/>
            <person name="Ponting C.P."/>
            <person name="Duarte J.M."/>
            <person name="Rice S."/>
            <person name="Goodstadt L."/>
            <person name="Beatson S.A."/>
            <person name="Emes R.D."/>
            <person name="Winter E.E."/>
            <person name="Webber C."/>
            <person name="Brandt P."/>
            <person name="Nyakatura G."/>
            <person name="Adetobi M."/>
            <person name="Chiaromonte F."/>
            <person name="Elnitski L."/>
            <person name="Eswara P."/>
            <person name="Hardison R.C."/>
            <person name="Hou M."/>
            <person name="Kolbe D."/>
            <person name="Makova K."/>
            <person name="Miller W."/>
            <person name="Nekrutenko A."/>
            <person name="Riemer C."/>
            <person name="Schwartz S."/>
            <person name="Taylor J."/>
            <person name="Yang S."/>
            <person name="Zhang Y."/>
            <person name="Lindpaintner K."/>
            <person name="Andrews T.D."/>
            <person name="Caccamo M."/>
            <person name="Clamp M."/>
            <person name="Clarke L."/>
            <person name="Curwen V."/>
            <person name="Durbin R.M."/>
            <person name="Eyras E."/>
            <person name="Searle S.M."/>
            <person name="Cooper G.M."/>
            <person name="Batzoglou S."/>
            <person name="Brudno M."/>
            <person name="Sidow A."/>
            <person name="Stone E.A."/>
            <person name="Payseur B.A."/>
            <person name="Bourque G."/>
            <person name="Lopez-Otin C."/>
            <person name="Puente X.S."/>
            <person name="Chakrabarti K."/>
            <person name="Chatterji S."/>
            <person name="Dewey C."/>
            <person name="Pachter L."/>
            <person name="Bray N."/>
            <person name="Yap V.B."/>
            <person name="Caspi A."/>
            <person name="Tesler G."/>
            <person name="Pevzner P.A."/>
            <person name="Haussler D."/>
            <person name="Roskin K.M."/>
            <person name="Baertsch R."/>
            <person name="Clawson H."/>
            <person name="Furey T.S."/>
            <person name="Hinrichs A.S."/>
            <person name="Karolchik D."/>
            <person name="Kent W.J."/>
            <person name="Rosenbloom K.R."/>
            <person name="Trumbower H."/>
            <person name="Weirauch M."/>
            <person name="Cooper D.N."/>
            <person name="Stenson P.D."/>
            <person name="Ma B."/>
            <person name="Brent M."/>
            <person name="Arumugam M."/>
            <person name="Shteynberg D."/>
            <person name="Copley R.R."/>
            <person name="Taylor M.S."/>
            <person name="Riethman H."/>
            <person name="Mudunuri U."/>
            <person name="Peterson J."/>
            <person name="Guyer M."/>
            <person name="Felsenfeld A."/>
            <person name="Old S."/>
            <person name="Mockrin S."/>
            <person name="Collins F.S."/>
        </authorList>
    </citation>
    <scope>NUCLEOTIDE SEQUENCE [LARGE SCALE GENOMIC DNA]</scope>
    <source>
        <strain>Brown Norway</strain>
    </source>
</reference>
<reference key="2">
    <citation type="journal article" date="2001" name="J. Cell Biol.">
        <title>Differentiation and stress-dependent nuclear-cytoplasmic redistribution of myopodin, a novel actin bundling protein.</title>
        <authorList>
            <person name="Weins A."/>
            <person name="Schwarz K."/>
            <person name="Faul C."/>
            <person name="Barisoni L."/>
            <person name="Linke W.A."/>
            <person name="Mundel P."/>
        </authorList>
    </citation>
    <scope>SUBCELLULAR LOCATION</scope>
</reference>
<reference key="3">
    <citation type="journal article" date="2012" name="Nat. Commun.">
        <title>Quantitative maps of protein phosphorylation sites across 14 different rat organs and tissues.</title>
        <authorList>
            <person name="Lundby A."/>
            <person name="Secher A."/>
            <person name="Lage K."/>
            <person name="Nordsborg N.B."/>
            <person name="Dmytriyev A."/>
            <person name="Lundby C."/>
            <person name="Olsen J.V."/>
        </authorList>
    </citation>
    <scope>PHOSPHORYLATION [LARGE SCALE ANALYSIS] AT SER-304; SER-323; SER-324; THR-327; SER-518; SER-543; SER-544; SER-546; SER-606; SER-621; SER-700; THR-749; SER-772; SER-900; SER-904; SER-908; SER-1014 AND SER-1090</scope>
    <scope>IDENTIFICATION BY MASS SPECTROMETRY [LARGE SCALE ANALYSIS]</scope>
</reference>
<reference key="4">
    <citation type="journal article" date="2013" name="Curr. Biol.">
        <title>Cellular mechanotransduction relies on tension-induced and chaperone-assisted autophagy.</title>
        <authorList>
            <person name="Ulbricht A."/>
            <person name="Eppler F.J."/>
            <person name="Tapia V.E."/>
            <person name="van der Ven P.F."/>
            <person name="Hampe N."/>
            <person name="Hersch N."/>
            <person name="Vakeel P."/>
            <person name="Stadel D."/>
            <person name="Haas A."/>
            <person name="Saftig P."/>
            <person name="Behrends C."/>
            <person name="Fuerst D.O."/>
            <person name="Volkmer R."/>
            <person name="Hoffmann B."/>
            <person name="Kolanus W."/>
            <person name="Hoehfeld J."/>
        </authorList>
    </citation>
    <scope>FUNCTION</scope>
    <scope>ASSOCIATION WITH THE CASA COMPLEX</scope>
    <scope>ALTERNATIVE SPLICING</scope>
</reference>
<protein>
    <recommendedName>
        <fullName>Synaptopodin-2</fullName>
    </recommendedName>
    <alternativeName>
        <fullName>Myopodin</fullName>
    </alternativeName>
</protein>
<name>SYNP2_RAT</name>
<keyword id="KW-0025">Alternative splicing</keyword>
<keyword id="KW-0965">Cell junction</keyword>
<keyword id="KW-0963">Cytoplasm</keyword>
<keyword id="KW-0206">Cytoskeleton</keyword>
<keyword id="KW-0539">Nucleus</keyword>
<keyword id="KW-0597">Phosphoprotein</keyword>
<keyword id="KW-1185">Reference proteome</keyword>
<proteinExistence type="evidence at protein level"/>
<dbReference type="EMBL" id="AABR07013204">
    <property type="status" value="NOT_ANNOTATED_CDS"/>
    <property type="molecule type" value="Genomic_DNA"/>
</dbReference>
<dbReference type="EMBL" id="AABR07013205">
    <property type="status" value="NOT_ANNOTATED_CDS"/>
    <property type="molecule type" value="Genomic_DNA"/>
</dbReference>
<dbReference type="RefSeq" id="NP_001178892.1">
    <molecule id="D4A702-1"/>
    <property type="nucleotide sequence ID" value="NM_001191963.1"/>
</dbReference>
<dbReference type="SMR" id="D4A702"/>
<dbReference type="FunCoup" id="D4A702">
    <property type="interactions" value="615"/>
</dbReference>
<dbReference type="IntAct" id="D4A702">
    <property type="interactions" value="1"/>
</dbReference>
<dbReference type="STRING" id="10116.ENSRNOP00000019931"/>
<dbReference type="GlyGen" id="D4A702">
    <property type="glycosylation" value="2 sites, 1 O-linked glycan (1 site)"/>
</dbReference>
<dbReference type="iPTMnet" id="D4A702"/>
<dbReference type="PhosphoSitePlus" id="D4A702"/>
<dbReference type="PaxDb" id="10116-ENSRNOP00000019931"/>
<dbReference type="PeptideAtlas" id="D4A702"/>
<dbReference type="GeneID" id="499702"/>
<dbReference type="KEGG" id="rno:499702"/>
<dbReference type="UCSC" id="RGD:1564779">
    <molecule id="D4A702-1"/>
    <property type="organism name" value="rat"/>
</dbReference>
<dbReference type="AGR" id="RGD:1564779"/>
<dbReference type="CTD" id="171024"/>
<dbReference type="RGD" id="1564779">
    <property type="gene designation" value="Synpo2"/>
</dbReference>
<dbReference type="VEuPathDB" id="HostDB:ENSRNOG00000014867"/>
<dbReference type="eggNOG" id="KOG1703">
    <property type="taxonomic scope" value="Eukaryota"/>
</dbReference>
<dbReference type="HOGENOM" id="CLU_007120_0_0_1"/>
<dbReference type="InParanoid" id="D4A702"/>
<dbReference type="OrthoDB" id="83642at9989"/>
<dbReference type="TreeFam" id="TF330867"/>
<dbReference type="PRO" id="PR:D4A702"/>
<dbReference type="Proteomes" id="UP000002494">
    <property type="component" value="Chromosome 2"/>
</dbReference>
<dbReference type="Bgee" id="ENSRNOG00000014867">
    <property type="expression patterns" value="Expressed in skeletal muscle tissue and 18 other cell types or tissues"/>
</dbReference>
<dbReference type="GO" id="GO:0015629">
    <property type="term" value="C:actin cytoskeleton"/>
    <property type="evidence" value="ECO:0000318"/>
    <property type="project" value="GO_Central"/>
</dbReference>
<dbReference type="GO" id="GO:0005925">
    <property type="term" value="C:focal adhesion"/>
    <property type="evidence" value="ECO:0000266"/>
    <property type="project" value="RGD"/>
</dbReference>
<dbReference type="GO" id="GO:0005634">
    <property type="term" value="C:nucleus"/>
    <property type="evidence" value="ECO:0000314"/>
    <property type="project" value="UniProtKB"/>
</dbReference>
<dbReference type="GO" id="GO:0001725">
    <property type="term" value="C:stress fiber"/>
    <property type="evidence" value="ECO:0000314"/>
    <property type="project" value="UniProtKB"/>
</dbReference>
<dbReference type="GO" id="GO:0030018">
    <property type="term" value="C:Z disc"/>
    <property type="evidence" value="ECO:0000314"/>
    <property type="project" value="UniProtKB"/>
</dbReference>
<dbReference type="GO" id="GO:0071889">
    <property type="term" value="F:14-3-3 protein binding"/>
    <property type="evidence" value="ECO:0000250"/>
    <property type="project" value="UniProtKB"/>
</dbReference>
<dbReference type="GO" id="GO:0003779">
    <property type="term" value="F:actin binding"/>
    <property type="evidence" value="ECO:0000318"/>
    <property type="project" value="GO_Central"/>
</dbReference>
<dbReference type="GO" id="GO:0051393">
    <property type="term" value="F:alpha-actinin binding"/>
    <property type="evidence" value="ECO:0000266"/>
    <property type="project" value="RGD"/>
</dbReference>
<dbReference type="GO" id="GO:0031005">
    <property type="term" value="F:filamin binding"/>
    <property type="evidence" value="ECO:0000266"/>
    <property type="project" value="RGD"/>
</dbReference>
<dbReference type="GO" id="GO:0051371">
    <property type="term" value="F:muscle alpha-actinin binding"/>
    <property type="evidence" value="ECO:0000250"/>
    <property type="project" value="UniProtKB"/>
</dbReference>
<dbReference type="GO" id="GO:0030674">
    <property type="term" value="F:protein-macromolecule adaptor activity"/>
    <property type="evidence" value="ECO:0000315"/>
    <property type="project" value="ARUK-UCL"/>
</dbReference>
<dbReference type="GO" id="GO:0000045">
    <property type="term" value="P:autophagosome assembly"/>
    <property type="evidence" value="ECO:0000315"/>
    <property type="project" value="UniProtKB"/>
</dbReference>
<dbReference type="GO" id="GO:0061684">
    <property type="term" value="P:chaperone-mediated autophagy"/>
    <property type="evidence" value="ECO:0000315"/>
    <property type="project" value="ARUK-UCL"/>
</dbReference>
<dbReference type="GO" id="GO:0032233">
    <property type="term" value="P:positive regulation of actin filament bundle assembly"/>
    <property type="evidence" value="ECO:0000266"/>
    <property type="project" value="RGD"/>
</dbReference>
<dbReference type="GO" id="GO:0030335">
    <property type="term" value="P:positive regulation of cell migration"/>
    <property type="evidence" value="ECO:0000266"/>
    <property type="project" value="RGD"/>
</dbReference>
<dbReference type="CDD" id="cd10820">
    <property type="entry name" value="PDZ_SYNPO2-like"/>
    <property type="match status" value="1"/>
</dbReference>
<dbReference type="FunFam" id="2.30.42.10:FF:000139">
    <property type="entry name" value="synaptopodin-2 isoform X1"/>
    <property type="match status" value="1"/>
</dbReference>
<dbReference type="Gene3D" id="2.30.42.10">
    <property type="match status" value="1"/>
</dbReference>
<dbReference type="InterPro" id="IPR001478">
    <property type="entry name" value="PDZ"/>
</dbReference>
<dbReference type="InterPro" id="IPR036034">
    <property type="entry name" value="PDZ_sf"/>
</dbReference>
<dbReference type="InterPro" id="IPR051976">
    <property type="entry name" value="Synaptopodin_domain"/>
</dbReference>
<dbReference type="PANTHER" id="PTHR24217">
    <property type="entry name" value="PUTATIVE-RELATED"/>
    <property type="match status" value="1"/>
</dbReference>
<dbReference type="PANTHER" id="PTHR24217:SF9">
    <property type="entry name" value="SYNAPTOPODIN-2"/>
    <property type="match status" value="1"/>
</dbReference>
<dbReference type="Pfam" id="PF00595">
    <property type="entry name" value="PDZ"/>
    <property type="match status" value="1"/>
</dbReference>
<dbReference type="SMART" id="SM00228">
    <property type="entry name" value="PDZ"/>
    <property type="match status" value="1"/>
</dbReference>
<dbReference type="SUPFAM" id="SSF50156">
    <property type="entry name" value="PDZ domain-like"/>
    <property type="match status" value="1"/>
</dbReference>
<dbReference type="PROSITE" id="PS50106">
    <property type="entry name" value="PDZ"/>
    <property type="match status" value="1"/>
</dbReference>
<evidence type="ECO:0000250" key="1">
    <source>
        <dbReference type="UniProtKB" id="Q91YE8"/>
    </source>
</evidence>
<evidence type="ECO:0000250" key="2">
    <source>
        <dbReference type="UniProtKB" id="Q9UMS6"/>
    </source>
</evidence>
<evidence type="ECO:0000255" key="3">
    <source>
        <dbReference type="PROSITE-ProRule" id="PRU00143"/>
    </source>
</evidence>
<evidence type="ECO:0000256" key="4">
    <source>
        <dbReference type="SAM" id="MobiDB-lite"/>
    </source>
</evidence>
<evidence type="ECO:0000269" key="5">
    <source>
    </source>
</evidence>
<evidence type="ECO:0000269" key="6">
    <source>
    </source>
</evidence>
<evidence type="ECO:0000305" key="7"/>
<evidence type="ECO:0000305" key="8">
    <source>
    </source>
</evidence>
<evidence type="ECO:0007744" key="9">
    <source>
    </source>
</evidence>
<accession>D4A702</accession>
<sequence length="1262" mass="136025">MGTGDFICISMTGGAPWGFRLQGGKEEKQPLQVAKIRSQSKASDSGLCVGDEVVSINGNPCADLTYPEVIKLMESITDSLHLLIKRPTSGTSEALDSETENTNHQHLPHGGPMESTTLQIQHAAKTQGKDFLLASVQTSAPRTEDQGNAWGYAECTTEDQVSQMPGSQEGHLVEEVILRKKPEAGQPGHVVELQLSLSKERQRCTSDPIVTLLGNEKFKSPDPDWGTQHGRTVHINSIPAPEKADTSLTSGTTVQTSSGRELTVIQGRDPGGTGLPQVEVILDCSDRLKAEECRLQAGRGCVASPVEGGRSEAPPSLVSFAVSSEGTEQGEDQRSGKDQGRPHKHRARHARLRRSESLSEKQVKEAKSKCKSIALLLTDAPNPNSKGVLMFKKRRRRARKYTLVSYGTGELEREEEEEDQEAGDKDEISDLAFLGTSESEVDEELLSDVDDNTQVVNFDWDSGLVDIEKRLNRGDKMEMLPDTTGKGALMFAKRRERMEQFTAQNEEEKTGGLAGGGSDALQTDGLRTMTSYQRKEESVRMQSSVSESSFQMGRSLGSVPQQNGFSGVSETAGPQRMIPMNRTAKPFLGSVNQTAAPFSPTQSVTSPIPDFPAPPPYSAVSPPPEAFSRGISSPVAGPAQPPPWPQPAPWSQPAFYDSSEQIASRDERIAVPAKRTGILQEAKRRGTTKPMFTFKETKVSPNPELLSLLQNAEGKRGTGAGGDSGPEEDYLSLGAEACNFMQSSAKQKTPPPVAPKPAVKTSSSSQPVAPVSPVWSPGVAPAQGPAFSTTNPPNPPQVTAVSSIKIAQPTCPPARPASALNLAGPFKGPQAAVVSHNYTPKPSAPTPLVNAAPAGAGGPSNELPGMSGKGAQLFAKRQSRMEKYVVDSDTVQAHTVRAQSPTPSLPASWKYSSNVRAPPPVAYNPIHSPSYPLAAIKSQPPGAQASKTSKKKGKKPLNTLDVMKHQPYQLNASLFTFQPPDSKDGLPQKSTVKVSSVAPAMKQALPPRQADIGSPTNAKASSVYSVPAYTSQPNFFAEATSPVSASPVPVSVPTSPKQETTSTSYFVAPRPKFSAKKSGVTVQENWRSLSLPGRAAPPIMSAPPWLCQPAYSYSSKPTLEQEKANKRPTPWEAAAKSPLGLVDEAFRPRNIEESIVANVVSAARRKVFAGSQEDWKERLSFVPQTQKTSMSFSERREYNVPSPVNSHVSSHSLYSSQLPYVCYRKESRNDLKAMSMDTRSEYCLPLGGYDYNPHPRGWRHQP</sequence>
<gene>
    <name type="primary">Synpo2</name>
</gene>
<feature type="chain" id="PRO_0000439584" description="Synaptopodin-2">
    <location>
        <begin position="1"/>
        <end position="1262"/>
    </location>
</feature>
<feature type="domain" description="PDZ" evidence="3">
    <location>
        <begin position="6"/>
        <end position="88"/>
    </location>
</feature>
<feature type="region of interest" description="Interaction with VPS18" evidence="2">
    <location>
        <begin position="1"/>
        <end position="174"/>
    </location>
</feature>
<feature type="region of interest" description="Disordered" evidence="4">
    <location>
        <begin position="89"/>
        <end position="114"/>
    </location>
</feature>
<feature type="region of interest" description="Disordered" evidence="4">
    <location>
        <begin position="239"/>
        <end position="276"/>
    </location>
</feature>
<feature type="region of interest" description="Disordered" evidence="4">
    <location>
        <begin position="323"/>
        <end position="363"/>
    </location>
</feature>
<feature type="region of interest" description="Interaction with ACTN2" evidence="2">
    <location>
        <begin position="477"/>
        <end position="658"/>
    </location>
</feature>
<feature type="region of interest" description="Disordered" evidence="4">
    <location>
        <begin position="503"/>
        <end position="576"/>
    </location>
</feature>
<feature type="region of interest" description="F-actin binding" evidence="2">
    <location>
        <begin position="530"/>
        <end position="658"/>
    </location>
</feature>
<feature type="region of interest" description="Interaction with YWHAB" evidence="1">
    <location>
        <begin position="554"/>
        <end position="560"/>
    </location>
</feature>
<feature type="region of interest" description="Disordered" evidence="4">
    <location>
        <begin position="592"/>
        <end position="703"/>
    </location>
</feature>
<feature type="region of interest" description="Interaction with YWHAB" evidence="1">
    <location>
        <begin position="602"/>
        <end position="809"/>
    </location>
</feature>
<feature type="region of interest" description="Interaction with BAG3" evidence="2">
    <location>
        <begin position="610"/>
        <end position="621"/>
    </location>
</feature>
<feature type="region of interest" description="Interaction with ACTN2" evidence="2">
    <location>
        <begin position="659"/>
        <end position="922"/>
    </location>
</feature>
<feature type="region of interest" description="F-actin bundling activity" evidence="2">
    <location>
        <begin position="659"/>
        <end position="914"/>
    </location>
</feature>
<feature type="region of interest" description="F-actin binding" evidence="2">
    <location>
        <begin position="659"/>
        <end position="801"/>
    </location>
</feature>
<feature type="region of interest" description="Disordered" evidence="4">
    <location>
        <begin position="741"/>
        <end position="799"/>
    </location>
</feature>
<feature type="region of interest" description="Actin binding" evidence="1">
    <location>
        <begin position="745"/>
        <end position="898"/>
    </location>
</feature>
<feature type="region of interest" description="Interaction with FLNC" evidence="2">
    <location>
        <begin position="808"/>
        <end position="1153"/>
    </location>
</feature>
<feature type="region of interest" description="Disordered" evidence="4">
    <location>
        <begin position="833"/>
        <end position="868"/>
    </location>
</feature>
<feature type="region of interest" description="Interaction with ACTN2" evidence="2">
    <location>
        <begin position="899"/>
        <end position="1153"/>
    </location>
</feature>
<feature type="region of interest" description="Disordered" evidence="4">
    <location>
        <begin position="933"/>
        <end position="957"/>
    </location>
</feature>
<feature type="region of interest" description="Interaction with ZYX" evidence="2">
    <location>
        <begin position="999"/>
        <end position="1018"/>
    </location>
</feature>
<feature type="short sequence motif" description="Nuclear localization signal" evidence="1">
    <location>
        <begin position="392"/>
        <end position="400"/>
    </location>
</feature>
<feature type="short sequence motif" description="PPPY motif" evidence="2">
    <location>
        <begin position="614"/>
        <end position="617"/>
    </location>
</feature>
<feature type="compositionally biased region" description="Polar residues" evidence="4">
    <location>
        <begin position="89"/>
        <end position="105"/>
    </location>
</feature>
<feature type="compositionally biased region" description="Polar residues" evidence="4">
    <location>
        <begin position="246"/>
        <end position="260"/>
    </location>
</feature>
<feature type="compositionally biased region" description="Basic and acidic residues" evidence="4">
    <location>
        <begin position="331"/>
        <end position="341"/>
    </location>
</feature>
<feature type="compositionally biased region" description="Basic residues" evidence="4">
    <location>
        <begin position="342"/>
        <end position="352"/>
    </location>
</feature>
<feature type="compositionally biased region" description="Basic and acidic residues" evidence="4">
    <location>
        <begin position="353"/>
        <end position="363"/>
    </location>
</feature>
<feature type="compositionally biased region" description="Low complexity" evidence="4">
    <location>
        <begin position="540"/>
        <end position="552"/>
    </location>
</feature>
<feature type="compositionally biased region" description="Polar residues" evidence="4">
    <location>
        <begin position="558"/>
        <end position="569"/>
    </location>
</feature>
<feature type="compositionally biased region" description="Polar residues" evidence="4">
    <location>
        <begin position="592"/>
        <end position="606"/>
    </location>
</feature>
<feature type="compositionally biased region" description="Pro residues" evidence="4">
    <location>
        <begin position="609"/>
        <end position="625"/>
    </location>
</feature>
<feature type="compositionally biased region" description="Pro residues" evidence="4">
    <location>
        <begin position="639"/>
        <end position="650"/>
    </location>
</feature>
<feature type="compositionally biased region" description="Low complexity" evidence="4">
    <location>
        <begin position="756"/>
        <end position="782"/>
    </location>
</feature>
<feature type="compositionally biased region" description="Polar residues" evidence="4">
    <location>
        <begin position="786"/>
        <end position="799"/>
    </location>
</feature>
<feature type="modified residue" description="Phosphoserine" evidence="9">
    <location>
        <position position="304"/>
    </location>
</feature>
<feature type="modified residue" description="Phosphoserine" evidence="9">
    <location>
        <position position="323"/>
    </location>
</feature>
<feature type="modified residue" description="Phosphoserine" evidence="9">
    <location>
        <position position="324"/>
    </location>
</feature>
<feature type="modified residue" description="Phosphothreonine" evidence="9">
    <location>
        <position position="327"/>
    </location>
</feature>
<feature type="modified residue" description="Phosphoserine" evidence="9">
    <location>
        <position position="518"/>
    </location>
</feature>
<feature type="modified residue" description="Phosphoserine" evidence="9">
    <location>
        <position position="543"/>
    </location>
</feature>
<feature type="modified residue" description="Phosphoserine" evidence="9">
    <location>
        <position position="544"/>
    </location>
</feature>
<feature type="modified residue" description="Phosphoserine" evidence="9">
    <location>
        <position position="546"/>
    </location>
</feature>
<feature type="modified residue" description="Phosphoserine" evidence="1">
    <location>
        <position position="549"/>
    </location>
</feature>
<feature type="modified residue" description="Phosphoserine; by PKA" evidence="1">
    <location>
        <position position="558"/>
    </location>
</feature>
<feature type="modified residue" description="Phosphoserine" evidence="1">
    <location>
        <position position="599"/>
    </location>
</feature>
<feature type="modified residue" description="Phosphothreonine; by PKA and CaMK2" evidence="1">
    <location>
        <position position="605"/>
    </location>
</feature>
<feature type="modified residue" description="Phosphoserine" evidence="9">
    <location>
        <position position="606"/>
    </location>
</feature>
<feature type="modified residue" description="Phosphotyrosine" evidence="2">
    <location>
        <position position="617"/>
    </location>
</feature>
<feature type="modified residue" description="Phosphoserine" evidence="9">
    <location>
        <position position="621"/>
    </location>
</feature>
<feature type="modified residue" description="Phosphoserine" evidence="9">
    <location>
        <position position="700"/>
    </location>
</feature>
<feature type="modified residue" description="Phosphoserine" evidence="2">
    <location>
        <position position="724"/>
    </location>
</feature>
<feature type="modified residue" description="Phosphothreonine" evidence="9">
    <location>
        <position position="749"/>
    </location>
</feature>
<feature type="modified residue" description="Phosphoserine" evidence="9">
    <location>
        <position position="772"/>
    </location>
</feature>
<feature type="modified residue" description="Phosphoserine" evidence="1">
    <location>
        <position position="776"/>
    </location>
</feature>
<feature type="modified residue" description="Phosphoserine" evidence="9">
    <location>
        <position position="900"/>
    </location>
</feature>
<feature type="modified residue" description="Phosphoserine" evidence="9">
    <location>
        <position position="904"/>
    </location>
</feature>
<feature type="modified residue" description="Phosphoserine" evidence="9">
    <location>
        <position position="908"/>
    </location>
</feature>
<feature type="modified residue" description="Phosphoserine" evidence="9">
    <location>
        <position position="1014"/>
    </location>
</feature>
<feature type="modified residue" description="Phosphoserine" evidence="2">
    <location>
        <position position="1055"/>
    </location>
</feature>
<feature type="modified residue" description="Phosphoserine" evidence="9">
    <location>
        <position position="1090"/>
    </location>
</feature>
<organism>
    <name type="scientific">Rattus norvegicus</name>
    <name type="common">Rat</name>
    <dbReference type="NCBI Taxonomy" id="10116"/>
    <lineage>
        <taxon>Eukaryota</taxon>
        <taxon>Metazoa</taxon>
        <taxon>Chordata</taxon>
        <taxon>Craniata</taxon>
        <taxon>Vertebrata</taxon>
        <taxon>Euteleostomi</taxon>
        <taxon>Mammalia</taxon>
        <taxon>Eutheria</taxon>
        <taxon>Euarchontoglires</taxon>
        <taxon>Glires</taxon>
        <taxon>Rodentia</taxon>
        <taxon>Myomorpha</taxon>
        <taxon>Muroidea</taxon>
        <taxon>Muridae</taxon>
        <taxon>Murinae</taxon>
        <taxon>Rattus</taxon>
    </lineage>
</organism>
<comment type="function">
    <text evidence="1 2 6">Has an actin-binding and actin-bundling activity. Can induce the formation of F-actin networks. At the sarcomeric Z lines is proposed to act as adapter protein that links nascent myofibers to the sarcolemma via ZYX and may play a role in early assembly and stabilization of the Z lines (By similarity). Involved in autophagosome formation. May play a role in chaperone-assisted selective autophagy (CASA) involved in Z lines maintenance in striated muscle under mechanical tension; may link the client-processing CASA chaperone machinery to a membrane-tethering and fusion complex providing autophagosome membranes (PubMed:23434281). Involved in regulation of cell migration. May be a tumor suppressor (By similarity).</text>
</comment>
<comment type="subunit">
    <text evidence="1 2 8">May self-associate in muscle cells under oxidative stress. Binds F-actin. Interacts with ACTN2; ACTN2 is proposed to anchor SYOP2 at Z lines in mature myocytes. Interacts with AKAP6, PPP3CA and CAMK2A. Interacts (phosphorylated form) with YWHAB; YWHAB competes with ACTN2 for interaction with SYNPO2. Interacts with KPNA2; mediating nuclear import of SYNOP2; dependent on interaction with YWHAB. Interacts with IPO13; may be implicated in SYNOP2 nuclear import. Interacts with ZYX, FLNC, ILK (By similarity). Interacts with BAG3 (via WW 1 domain) (By similarity). May associate with the CASA complex consisting of HSPA8, HSPB8 and BAG3 (PubMed:23434281). Interacts with VPS18 (By similarity).</text>
</comment>
<comment type="subcellular location">
    <subcellularLocation>
        <location evidence="1">Nucleus</location>
    </subcellularLocation>
    <subcellularLocation>
        <location evidence="1">Cytoplasm</location>
    </subcellularLocation>
    <subcellularLocation>
        <location evidence="2">Cytoplasm</location>
        <location evidence="2">Cytoskeleton</location>
    </subcellularLocation>
    <subcellularLocation>
        <location evidence="5">Cytoplasm</location>
        <location evidence="5">Myofibril</location>
        <location evidence="5">Sarcomere</location>
        <location evidence="5">Z line</location>
    </subcellularLocation>
    <subcellularLocation>
        <location evidence="2">Cell junction</location>
        <location evidence="2">Focal adhesion</location>
    </subcellularLocation>
    <text evidence="1 2">Shuttles between the nucleus and the cytoplasm in a differentiation-dependent and stress-induced fashion. In undifferentiated myoblasts strongly expressed in the nucleus, after induction of myotube differentiation is located to both nucleus and cytoplasm along acting filaments, and in differentiated myotubes is located at the Z lines. Upon stress redistributes from cytoplasm of myoblasts and myotubes to the nucleus. Nuclear import is KPNA2-dependent and promoted by phosphorylation by PKA and/or CaMK2, and inhibition of calcineurin. The nuclear export is XPO1-dependent. Localized in a fiber-like pattern, partly overlapping with filamentous actin (By similarity).</text>
</comment>
<comment type="alternative products">
    <event type="alternative splicing"/>
    <isoform>
        <id>D4A702-1</id>
        <name>1</name>
        <sequence type="displayed"/>
    </isoform>
    <text>=Additional isoforms seem to exist.</text>
</comment>
<comment type="domain">
    <text evidence="2">The PPPY motif interacts with the WW domain 1 of BAG3.</text>
</comment>
<comment type="PTM">
    <text evidence="1">Phosphorylated by PKA, and by CaMK2 at multiple sites. Dephosphorylated by calcineurin at Ser-558 and Thr-605; abrogating interaction with YWHAB and impairing nuclear import.</text>
</comment>
<comment type="similarity">
    <text evidence="7">Belongs to the synaptopodin family.</text>
</comment>